<dbReference type="EMBL" id="CP001598">
    <property type="protein sequence ID" value="ACQ48796.1"/>
    <property type="molecule type" value="Genomic_DNA"/>
</dbReference>
<dbReference type="RefSeq" id="WP_000034699.1">
    <property type="nucleotide sequence ID" value="NC_012659.1"/>
</dbReference>
<dbReference type="SMR" id="C3P8M0"/>
<dbReference type="GeneID" id="45024191"/>
<dbReference type="KEGG" id="bai:BAA_4558"/>
<dbReference type="HOGENOM" id="CLU_005965_2_4_9"/>
<dbReference type="GO" id="GO:0005524">
    <property type="term" value="F:ATP binding"/>
    <property type="evidence" value="ECO:0007669"/>
    <property type="project" value="UniProtKB-UniRule"/>
</dbReference>
<dbReference type="GO" id="GO:0140662">
    <property type="term" value="F:ATP-dependent protein folding chaperone"/>
    <property type="evidence" value="ECO:0007669"/>
    <property type="project" value="InterPro"/>
</dbReference>
<dbReference type="GO" id="GO:0051082">
    <property type="term" value="F:unfolded protein binding"/>
    <property type="evidence" value="ECO:0007669"/>
    <property type="project" value="InterPro"/>
</dbReference>
<dbReference type="CDD" id="cd10234">
    <property type="entry name" value="ASKHA_NBD_HSP70_DnaK-like"/>
    <property type="match status" value="1"/>
</dbReference>
<dbReference type="FunFam" id="2.60.34.10:FF:000014">
    <property type="entry name" value="Chaperone protein DnaK HSP70"/>
    <property type="match status" value="1"/>
</dbReference>
<dbReference type="FunFam" id="1.20.1270.10:FF:000004">
    <property type="entry name" value="Molecular chaperone DnaK"/>
    <property type="match status" value="1"/>
</dbReference>
<dbReference type="FunFam" id="3.30.420.40:FF:000071">
    <property type="entry name" value="Molecular chaperone DnaK"/>
    <property type="match status" value="1"/>
</dbReference>
<dbReference type="FunFam" id="3.90.640.10:FF:000003">
    <property type="entry name" value="Molecular chaperone DnaK"/>
    <property type="match status" value="1"/>
</dbReference>
<dbReference type="Gene3D" id="1.20.1270.10">
    <property type="match status" value="1"/>
</dbReference>
<dbReference type="Gene3D" id="3.30.420.40">
    <property type="match status" value="2"/>
</dbReference>
<dbReference type="Gene3D" id="3.90.640.10">
    <property type="entry name" value="Actin, Chain A, domain 4"/>
    <property type="match status" value="1"/>
</dbReference>
<dbReference type="Gene3D" id="2.60.34.10">
    <property type="entry name" value="Substrate Binding Domain Of DNAk, Chain A, domain 1"/>
    <property type="match status" value="1"/>
</dbReference>
<dbReference type="HAMAP" id="MF_00332">
    <property type="entry name" value="DnaK"/>
    <property type="match status" value="1"/>
</dbReference>
<dbReference type="InterPro" id="IPR043129">
    <property type="entry name" value="ATPase_NBD"/>
</dbReference>
<dbReference type="InterPro" id="IPR012725">
    <property type="entry name" value="Chaperone_DnaK"/>
</dbReference>
<dbReference type="InterPro" id="IPR018181">
    <property type="entry name" value="Heat_shock_70_CS"/>
</dbReference>
<dbReference type="InterPro" id="IPR029048">
    <property type="entry name" value="HSP70_C_sf"/>
</dbReference>
<dbReference type="InterPro" id="IPR029047">
    <property type="entry name" value="HSP70_peptide-bd_sf"/>
</dbReference>
<dbReference type="InterPro" id="IPR013126">
    <property type="entry name" value="Hsp_70_fam"/>
</dbReference>
<dbReference type="NCBIfam" id="NF001413">
    <property type="entry name" value="PRK00290.1"/>
    <property type="match status" value="1"/>
</dbReference>
<dbReference type="NCBIfam" id="TIGR02350">
    <property type="entry name" value="prok_dnaK"/>
    <property type="match status" value="1"/>
</dbReference>
<dbReference type="PANTHER" id="PTHR19375">
    <property type="entry name" value="HEAT SHOCK PROTEIN 70KDA"/>
    <property type="match status" value="1"/>
</dbReference>
<dbReference type="Pfam" id="PF00012">
    <property type="entry name" value="HSP70"/>
    <property type="match status" value="1"/>
</dbReference>
<dbReference type="PRINTS" id="PR00301">
    <property type="entry name" value="HEATSHOCK70"/>
</dbReference>
<dbReference type="SUPFAM" id="SSF53067">
    <property type="entry name" value="Actin-like ATPase domain"/>
    <property type="match status" value="2"/>
</dbReference>
<dbReference type="SUPFAM" id="SSF100934">
    <property type="entry name" value="Heat shock protein 70kD (HSP70), C-terminal subdomain"/>
    <property type="match status" value="1"/>
</dbReference>
<dbReference type="SUPFAM" id="SSF100920">
    <property type="entry name" value="Heat shock protein 70kD (HSP70), peptide-binding domain"/>
    <property type="match status" value="1"/>
</dbReference>
<dbReference type="PROSITE" id="PS00297">
    <property type="entry name" value="HSP70_1"/>
    <property type="match status" value="1"/>
</dbReference>
<dbReference type="PROSITE" id="PS00329">
    <property type="entry name" value="HSP70_2"/>
    <property type="match status" value="1"/>
</dbReference>
<dbReference type="PROSITE" id="PS01036">
    <property type="entry name" value="HSP70_3"/>
    <property type="match status" value="1"/>
</dbReference>
<organism>
    <name type="scientific">Bacillus anthracis (strain A0248)</name>
    <dbReference type="NCBI Taxonomy" id="592021"/>
    <lineage>
        <taxon>Bacteria</taxon>
        <taxon>Bacillati</taxon>
        <taxon>Bacillota</taxon>
        <taxon>Bacilli</taxon>
        <taxon>Bacillales</taxon>
        <taxon>Bacillaceae</taxon>
        <taxon>Bacillus</taxon>
        <taxon>Bacillus cereus group</taxon>
    </lineage>
</organism>
<feature type="chain" id="PRO_1000133128" description="Chaperone protein DnaK">
    <location>
        <begin position="1"/>
        <end position="611"/>
    </location>
</feature>
<feature type="region of interest" description="Disordered" evidence="2">
    <location>
        <begin position="577"/>
        <end position="598"/>
    </location>
</feature>
<feature type="compositionally biased region" description="Low complexity" evidence="2">
    <location>
        <begin position="577"/>
        <end position="592"/>
    </location>
</feature>
<feature type="modified residue" description="Phosphothreonine; by autocatalysis" evidence="1">
    <location>
        <position position="173"/>
    </location>
</feature>
<name>DNAK_BACAA</name>
<proteinExistence type="inferred from homology"/>
<evidence type="ECO:0000255" key="1">
    <source>
        <dbReference type="HAMAP-Rule" id="MF_00332"/>
    </source>
</evidence>
<evidence type="ECO:0000256" key="2">
    <source>
        <dbReference type="SAM" id="MobiDB-lite"/>
    </source>
</evidence>
<gene>
    <name evidence="1" type="primary">dnaK</name>
    <name type="ordered locus">BAA_4558</name>
</gene>
<reference key="1">
    <citation type="submission" date="2009-04" db="EMBL/GenBank/DDBJ databases">
        <title>Genome sequence of Bacillus anthracis A0248.</title>
        <authorList>
            <person name="Dodson R.J."/>
            <person name="Munk A.C."/>
            <person name="Bruce D."/>
            <person name="Detter C."/>
            <person name="Tapia R."/>
            <person name="Sutton G."/>
            <person name="Sims D."/>
            <person name="Brettin T."/>
        </authorList>
    </citation>
    <scope>NUCLEOTIDE SEQUENCE [LARGE SCALE GENOMIC DNA]</scope>
    <source>
        <strain>A0248</strain>
    </source>
</reference>
<accession>C3P8M0</accession>
<comment type="function">
    <text evidence="1">Acts as a chaperone.</text>
</comment>
<comment type="induction">
    <text evidence="1">By stress conditions e.g. heat shock.</text>
</comment>
<comment type="similarity">
    <text evidence="1">Belongs to the heat shock protein 70 family.</text>
</comment>
<protein>
    <recommendedName>
        <fullName evidence="1">Chaperone protein DnaK</fullName>
    </recommendedName>
    <alternativeName>
        <fullName evidence="1">HSP70</fullName>
    </alternativeName>
    <alternativeName>
        <fullName evidence="1">Heat shock 70 kDa protein</fullName>
    </alternativeName>
    <alternativeName>
        <fullName evidence="1">Heat shock protein 70</fullName>
    </alternativeName>
</protein>
<keyword id="KW-0067">ATP-binding</keyword>
<keyword id="KW-0143">Chaperone</keyword>
<keyword id="KW-0547">Nucleotide-binding</keyword>
<keyword id="KW-0597">Phosphoprotein</keyword>
<keyword id="KW-0346">Stress response</keyword>
<sequence length="611" mass="65767">MSKIIGIDLGTTNSCVAVMEGGEPKVIPNPEGNRTTPSVVAFKNEERQVGEVAKRQAITNPNTIMSVKRHMGTDYKVEVEGKDYTPQEISAIILQNLKASAEAYLGETVTKAVITVPAYFNDAERQATKDAGRIAGLEVERIINEPTAAALAYGLEKQDEEQKILVYDLGGGTFDVSILELADGTFEVISTAGDNRLGGDDFDQVIIDHLVAEFKKENNIDLSQDKMALQRLKDAAEKAKKDLSGVTQTQISLPFISAGAAGPLHLELTLTRAKFEELSAGLVERTLEPTRRALKDAGFAPSELDKVILVGGSTRIPAVQEAIKRETGKEPYKGVNPDEVVALGAAVQGGVLTGDVEGVLLLDVTPLSLGIETMGGVFTKLIERNTTIPTSKSQVFSTAADNQPAVDIHVLQGERPMSADNKTLGRFQLTDLPPAPRGIPQIEVTFDIDANGIVNVRAKDLGTSKEQAITIQSSSGLSDEEVERMVQEAEANADADQKRKEEVELRNEADQLVFQTDKVVKDLEGKVDAAEVAKATEAKEALQAAIEKNELEEIRAKKDALQEIVQQLTVKLYEQAQAAAGQAEGAEGAQDAGAKKDNVVDAEFEEVKEDK</sequence>